<accession>B5RD09</accession>
<organism>
    <name type="scientific">Salmonella gallinarum (strain 287/91 / NCTC 13346)</name>
    <dbReference type="NCBI Taxonomy" id="550538"/>
    <lineage>
        <taxon>Bacteria</taxon>
        <taxon>Pseudomonadati</taxon>
        <taxon>Pseudomonadota</taxon>
        <taxon>Gammaproteobacteria</taxon>
        <taxon>Enterobacterales</taxon>
        <taxon>Enterobacteriaceae</taxon>
        <taxon>Salmonella</taxon>
    </lineage>
</organism>
<keyword id="KW-0143">Chaperone</keyword>
<sequence>MDYFTLFGLPARYQIDTQALSLRFQDLQRQYHPDKFANGTQAQQLAAVQQSATINQAWQTLRHPLTRAEYLLSLHGFDLASEQHTVRDTAFLMEQLTLREELDDIEQSKDDVRLESFIKRVQKMFDARLQQMVEQLDNAAWDAAADTVRKLRFLDKLRSSAEQLEEKLLDF</sequence>
<proteinExistence type="inferred from homology"/>
<name>HSCB_SALG2</name>
<gene>
    <name evidence="1" type="primary">hscB</name>
    <name type="ordered locus">SG2575</name>
</gene>
<evidence type="ECO:0000255" key="1">
    <source>
        <dbReference type="HAMAP-Rule" id="MF_00682"/>
    </source>
</evidence>
<dbReference type="EMBL" id="AM933173">
    <property type="protein sequence ID" value="CAR38395.1"/>
    <property type="molecule type" value="Genomic_DNA"/>
</dbReference>
<dbReference type="RefSeq" id="WP_000384398.1">
    <property type="nucleotide sequence ID" value="NC_011274.1"/>
</dbReference>
<dbReference type="SMR" id="B5RD09"/>
<dbReference type="KEGG" id="seg:SG2575"/>
<dbReference type="HOGENOM" id="CLU_068529_2_0_6"/>
<dbReference type="Proteomes" id="UP000008321">
    <property type="component" value="Chromosome"/>
</dbReference>
<dbReference type="GO" id="GO:1990230">
    <property type="term" value="C:iron-sulfur cluster transfer complex"/>
    <property type="evidence" value="ECO:0007669"/>
    <property type="project" value="TreeGrafter"/>
</dbReference>
<dbReference type="GO" id="GO:0001671">
    <property type="term" value="F:ATPase activator activity"/>
    <property type="evidence" value="ECO:0007669"/>
    <property type="project" value="InterPro"/>
</dbReference>
<dbReference type="GO" id="GO:0051087">
    <property type="term" value="F:protein-folding chaperone binding"/>
    <property type="evidence" value="ECO:0007669"/>
    <property type="project" value="InterPro"/>
</dbReference>
<dbReference type="GO" id="GO:0044571">
    <property type="term" value="P:[2Fe-2S] cluster assembly"/>
    <property type="evidence" value="ECO:0007669"/>
    <property type="project" value="InterPro"/>
</dbReference>
<dbReference type="GO" id="GO:0051259">
    <property type="term" value="P:protein complex oligomerization"/>
    <property type="evidence" value="ECO:0007669"/>
    <property type="project" value="InterPro"/>
</dbReference>
<dbReference type="GO" id="GO:0006457">
    <property type="term" value="P:protein folding"/>
    <property type="evidence" value="ECO:0007669"/>
    <property type="project" value="UniProtKB-UniRule"/>
</dbReference>
<dbReference type="CDD" id="cd06257">
    <property type="entry name" value="DnaJ"/>
    <property type="match status" value="1"/>
</dbReference>
<dbReference type="FunFam" id="1.10.287.110:FF:000008">
    <property type="entry name" value="Co-chaperone protein HscB"/>
    <property type="match status" value="1"/>
</dbReference>
<dbReference type="FunFam" id="1.20.1280.20:FF:000001">
    <property type="entry name" value="Co-chaperone protein HscB"/>
    <property type="match status" value="1"/>
</dbReference>
<dbReference type="Gene3D" id="1.10.287.110">
    <property type="entry name" value="DnaJ domain"/>
    <property type="match status" value="1"/>
</dbReference>
<dbReference type="Gene3D" id="1.20.1280.20">
    <property type="entry name" value="HscB, C-terminal domain"/>
    <property type="match status" value="1"/>
</dbReference>
<dbReference type="HAMAP" id="MF_00682">
    <property type="entry name" value="HscB"/>
    <property type="match status" value="1"/>
</dbReference>
<dbReference type="InterPro" id="IPR001623">
    <property type="entry name" value="DnaJ_domain"/>
</dbReference>
<dbReference type="InterPro" id="IPR004640">
    <property type="entry name" value="HscB"/>
</dbReference>
<dbReference type="InterPro" id="IPR036386">
    <property type="entry name" value="HscB_C_sf"/>
</dbReference>
<dbReference type="InterPro" id="IPR009073">
    <property type="entry name" value="HscB_oligo_C"/>
</dbReference>
<dbReference type="InterPro" id="IPR036869">
    <property type="entry name" value="J_dom_sf"/>
</dbReference>
<dbReference type="NCBIfam" id="TIGR00714">
    <property type="entry name" value="hscB"/>
    <property type="match status" value="1"/>
</dbReference>
<dbReference type="NCBIfam" id="NF003449">
    <property type="entry name" value="PRK05014.1"/>
    <property type="match status" value="1"/>
</dbReference>
<dbReference type="PANTHER" id="PTHR14021">
    <property type="entry name" value="IRON-SULFUR CLUSTER CO-CHAPERONE PROTEIN HSCB"/>
    <property type="match status" value="1"/>
</dbReference>
<dbReference type="PANTHER" id="PTHR14021:SF15">
    <property type="entry name" value="IRON-SULFUR CLUSTER CO-CHAPERONE PROTEIN HSCB"/>
    <property type="match status" value="1"/>
</dbReference>
<dbReference type="Pfam" id="PF07743">
    <property type="entry name" value="HSCB_C"/>
    <property type="match status" value="1"/>
</dbReference>
<dbReference type="SMART" id="SM00271">
    <property type="entry name" value="DnaJ"/>
    <property type="match status" value="1"/>
</dbReference>
<dbReference type="SUPFAM" id="SSF46565">
    <property type="entry name" value="Chaperone J-domain"/>
    <property type="match status" value="1"/>
</dbReference>
<dbReference type="SUPFAM" id="SSF47144">
    <property type="entry name" value="HSC20 (HSCB), C-terminal oligomerisation domain"/>
    <property type="match status" value="1"/>
</dbReference>
<dbReference type="PROSITE" id="PS50076">
    <property type="entry name" value="DNAJ_2"/>
    <property type="match status" value="1"/>
</dbReference>
<comment type="function">
    <text evidence="1">Co-chaperone involved in the maturation of iron-sulfur cluster-containing proteins. Seems to help targeting proteins to be folded toward HscA.</text>
</comment>
<comment type="subunit">
    <text evidence="1">Interacts with HscA and stimulates its ATPase activity. Interacts with IscU.</text>
</comment>
<comment type="similarity">
    <text evidence="1">Belongs to the HscB family.</text>
</comment>
<reference key="1">
    <citation type="journal article" date="2008" name="Genome Res.">
        <title>Comparative genome analysis of Salmonella enteritidis PT4 and Salmonella gallinarum 287/91 provides insights into evolutionary and host adaptation pathways.</title>
        <authorList>
            <person name="Thomson N.R."/>
            <person name="Clayton D.J."/>
            <person name="Windhorst D."/>
            <person name="Vernikos G."/>
            <person name="Davidson S."/>
            <person name="Churcher C."/>
            <person name="Quail M.A."/>
            <person name="Stevens M."/>
            <person name="Jones M.A."/>
            <person name="Watson M."/>
            <person name="Barron A."/>
            <person name="Layton A."/>
            <person name="Pickard D."/>
            <person name="Kingsley R.A."/>
            <person name="Bignell A."/>
            <person name="Clark L."/>
            <person name="Harris B."/>
            <person name="Ormond D."/>
            <person name="Abdellah Z."/>
            <person name="Brooks K."/>
            <person name="Cherevach I."/>
            <person name="Chillingworth T."/>
            <person name="Woodward J."/>
            <person name="Norberczak H."/>
            <person name="Lord A."/>
            <person name="Arrowsmith C."/>
            <person name="Jagels K."/>
            <person name="Moule S."/>
            <person name="Mungall K."/>
            <person name="Saunders M."/>
            <person name="Whitehead S."/>
            <person name="Chabalgoity J.A."/>
            <person name="Maskell D."/>
            <person name="Humphreys T."/>
            <person name="Roberts M."/>
            <person name="Barrow P.A."/>
            <person name="Dougan G."/>
            <person name="Parkhill J."/>
        </authorList>
    </citation>
    <scope>NUCLEOTIDE SEQUENCE [LARGE SCALE GENOMIC DNA]</scope>
    <source>
        <strain>287/91 / NCTC 13346</strain>
    </source>
</reference>
<feature type="chain" id="PRO_1000131751" description="Co-chaperone protein HscB">
    <location>
        <begin position="1"/>
        <end position="171"/>
    </location>
</feature>
<feature type="domain" description="J" evidence="1">
    <location>
        <begin position="2"/>
        <end position="74"/>
    </location>
</feature>
<protein>
    <recommendedName>
        <fullName evidence="1">Co-chaperone protein HscB</fullName>
    </recommendedName>
    <alternativeName>
        <fullName evidence="1">Hsc20</fullName>
    </alternativeName>
</protein>